<organism>
    <name type="scientific">Paracoccus denitrificans (strain Pd 1222)</name>
    <dbReference type="NCBI Taxonomy" id="318586"/>
    <lineage>
        <taxon>Bacteria</taxon>
        <taxon>Pseudomonadati</taxon>
        <taxon>Pseudomonadota</taxon>
        <taxon>Alphaproteobacteria</taxon>
        <taxon>Rhodobacterales</taxon>
        <taxon>Paracoccaceae</taxon>
        <taxon>Paracoccus</taxon>
    </lineage>
</organism>
<reference key="1">
    <citation type="submission" date="2006-12" db="EMBL/GenBank/DDBJ databases">
        <title>Complete sequence of chromosome 1 of Paracoccus denitrificans PD1222.</title>
        <authorList>
            <person name="Copeland A."/>
            <person name="Lucas S."/>
            <person name="Lapidus A."/>
            <person name="Barry K."/>
            <person name="Detter J.C."/>
            <person name="Glavina del Rio T."/>
            <person name="Hammon N."/>
            <person name="Israni S."/>
            <person name="Dalin E."/>
            <person name="Tice H."/>
            <person name="Pitluck S."/>
            <person name="Munk A.C."/>
            <person name="Brettin T."/>
            <person name="Bruce D."/>
            <person name="Han C."/>
            <person name="Tapia R."/>
            <person name="Gilna P."/>
            <person name="Schmutz J."/>
            <person name="Larimer F."/>
            <person name="Land M."/>
            <person name="Hauser L."/>
            <person name="Kyrpides N."/>
            <person name="Lykidis A."/>
            <person name="Spiro S."/>
            <person name="Richardson D.J."/>
            <person name="Moir J.W.B."/>
            <person name="Ferguson S.J."/>
            <person name="van Spanning R.J.M."/>
            <person name="Richardson P."/>
        </authorList>
    </citation>
    <scope>NUCLEOTIDE SEQUENCE [LARGE SCALE GENOMIC DNA]</scope>
    <source>
        <strain>Pd 1222</strain>
    </source>
</reference>
<proteinExistence type="inferred from homology"/>
<keyword id="KW-0963">Cytoplasm</keyword>
<keyword id="KW-0378">Hydrolase</keyword>
<keyword id="KW-1185">Reference proteome</keyword>
<keyword id="KW-0694">RNA-binding</keyword>
<keyword id="KW-0820">tRNA-binding</keyword>
<name>PTH_PARDP</name>
<feature type="chain" id="PRO_1000010622" description="Peptidyl-tRNA hydrolase">
    <location>
        <begin position="1"/>
        <end position="235"/>
    </location>
</feature>
<feature type="region of interest" description="Disordered" evidence="2">
    <location>
        <begin position="188"/>
        <end position="235"/>
    </location>
</feature>
<feature type="compositionally biased region" description="Basic and acidic residues" evidence="2">
    <location>
        <begin position="225"/>
        <end position="235"/>
    </location>
</feature>
<feature type="active site" description="Proton acceptor" evidence="1">
    <location>
        <position position="19"/>
    </location>
</feature>
<feature type="binding site" evidence="1">
    <location>
        <position position="14"/>
    </location>
    <ligand>
        <name>tRNA</name>
        <dbReference type="ChEBI" id="CHEBI:17843"/>
    </ligand>
</feature>
<feature type="binding site" evidence="1">
    <location>
        <position position="64"/>
    </location>
    <ligand>
        <name>tRNA</name>
        <dbReference type="ChEBI" id="CHEBI:17843"/>
    </ligand>
</feature>
<feature type="binding site" evidence="1">
    <location>
        <position position="66"/>
    </location>
    <ligand>
        <name>tRNA</name>
        <dbReference type="ChEBI" id="CHEBI:17843"/>
    </ligand>
</feature>
<feature type="binding site" evidence="1">
    <location>
        <position position="112"/>
    </location>
    <ligand>
        <name>tRNA</name>
        <dbReference type="ChEBI" id="CHEBI:17843"/>
    </ligand>
</feature>
<feature type="site" description="Discriminates between blocked and unblocked aminoacyl-tRNA" evidence="1">
    <location>
        <position position="9"/>
    </location>
</feature>
<feature type="site" description="Stabilizes the basic form of H active site to accept a proton" evidence="1">
    <location>
        <position position="91"/>
    </location>
</feature>
<sequence>MKLIVGLGNPGAKYAANRHNVGFMAVERIAGDHGFSPWRARFQGEIAEGRLGETRVTLLKPATFMNLSGQSVGEAMRYLKLAPQDVIVLHDELDLAPGKVRLKTGGGHAGHNGLRSLHQHIGEGYRRLRIGIGHPGDKDRVAGYVLSDFAKAEQAGLDDLLRGISDGAAALAAGDDARFMNAVAARVAPARNSGTRPDNPGKGSPEKPAAKPANDPIAEPPSLSDRLRALTERFR</sequence>
<comment type="function">
    <text evidence="1">Hydrolyzes ribosome-free peptidyl-tRNAs (with 1 or more amino acids incorporated), which drop off the ribosome during protein synthesis, or as a result of ribosome stalling.</text>
</comment>
<comment type="function">
    <text evidence="1">Catalyzes the release of premature peptidyl moieties from peptidyl-tRNA molecules trapped in stalled 50S ribosomal subunits, and thus maintains levels of free tRNAs and 50S ribosomes.</text>
</comment>
<comment type="catalytic activity">
    <reaction evidence="1">
        <text>an N-acyl-L-alpha-aminoacyl-tRNA + H2O = an N-acyl-L-amino acid + a tRNA + H(+)</text>
        <dbReference type="Rhea" id="RHEA:54448"/>
        <dbReference type="Rhea" id="RHEA-COMP:10123"/>
        <dbReference type="Rhea" id="RHEA-COMP:13883"/>
        <dbReference type="ChEBI" id="CHEBI:15377"/>
        <dbReference type="ChEBI" id="CHEBI:15378"/>
        <dbReference type="ChEBI" id="CHEBI:59874"/>
        <dbReference type="ChEBI" id="CHEBI:78442"/>
        <dbReference type="ChEBI" id="CHEBI:138191"/>
        <dbReference type="EC" id="3.1.1.29"/>
    </reaction>
</comment>
<comment type="subunit">
    <text evidence="1">Monomer.</text>
</comment>
<comment type="subcellular location">
    <subcellularLocation>
        <location evidence="1">Cytoplasm</location>
    </subcellularLocation>
</comment>
<comment type="similarity">
    <text evidence="1">Belongs to the PTH family.</text>
</comment>
<accession>A1B1H5</accession>
<evidence type="ECO:0000255" key="1">
    <source>
        <dbReference type="HAMAP-Rule" id="MF_00083"/>
    </source>
</evidence>
<evidence type="ECO:0000256" key="2">
    <source>
        <dbReference type="SAM" id="MobiDB-lite"/>
    </source>
</evidence>
<gene>
    <name evidence="1" type="primary">pth</name>
    <name type="ordered locus">Pden_1264</name>
</gene>
<protein>
    <recommendedName>
        <fullName evidence="1">Peptidyl-tRNA hydrolase</fullName>
        <shortName evidence="1">Pth</shortName>
        <ecNumber evidence="1">3.1.1.29</ecNumber>
    </recommendedName>
</protein>
<dbReference type="EC" id="3.1.1.29" evidence="1"/>
<dbReference type="EMBL" id="CP000489">
    <property type="protein sequence ID" value="ABL69369.1"/>
    <property type="molecule type" value="Genomic_DNA"/>
</dbReference>
<dbReference type="RefSeq" id="WP_011747587.1">
    <property type="nucleotide sequence ID" value="NC_008686.1"/>
</dbReference>
<dbReference type="SMR" id="A1B1H5"/>
<dbReference type="STRING" id="318586.Pden_1264"/>
<dbReference type="EnsemblBacteria" id="ABL69369">
    <property type="protein sequence ID" value="ABL69369"/>
    <property type="gene ID" value="Pden_1264"/>
</dbReference>
<dbReference type="GeneID" id="93452477"/>
<dbReference type="KEGG" id="pde:Pden_1264"/>
<dbReference type="eggNOG" id="COG0193">
    <property type="taxonomic scope" value="Bacteria"/>
</dbReference>
<dbReference type="HOGENOM" id="CLU_062456_1_0_5"/>
<dbReference type="OrthoDB" id="9800507at2"/>
<dbReference type="Proteomes" id="UP000000361">
    <property type="component" value="Chromosome 1"/>
</dbReference>
<dbReference type="GO" id="GO:0005737">
    <property type="term" value="C:cytoplasm"/>
    <property type="evidence" value="ECO:0007669"/>
    <property type="project" value="UniProtKB-SubCell"/>
</dbReference>
<dbReference type="GO" id="GO:0004045">
    <property type="term" value="F:peptidyl-tRNA hydrolase activity"/>
    <property type="evidence" value="ECO:0007669"/>
    <property type="project" value="UniProtKB-UniRule"/>
</dbReference>
<dbReference type="GO" id="GO:0000049">
    <property type="term" value="F:tRNA binding"/>
    <property type="evidence" value="ECO:0007669"/>
    <property type="project" value="UniProtKB-UniRule"/>
</dbReference>
<dbReference type="GO" id="GO:0006515">
    <property type="term" value="P:protein quality control for misfolded or incompletely synthesized proteins"/>
    <property type="evidence" value="ECO:0007669"/>
    <property type="project" value="UniProtKB-UniRule"/>
</dbReference>
<dbReference type="GO" id="GO:0072344">
    <property type="term" value="P:rescue of stalled ribosome"/>
    <property type="evidence" value="ECO:0007669"/>
    <property type="project" value="UniProtKB-UniRule"/>
</dbReference>
<dbReference type="CDD" id="cd00462">
    <property type="entry name" value="PTH"/>
    <property type="match status" value="1"/>
</dbReference>
<dbReference type="FunFam" id="3.40.50.1470:FF:000001">
    <property type="entry name" value="Peptidyl-tRNA hydrolase"/>
    <property type="match status" value="1"/>
</dbReference>
<dbReference type="Gene3D" id="3.40.50.1470">
    <property type="entry name" value="Peptidyl-tRNA hydrolase"/>
    <property type="match status" value="1"/>
</dbReference>
<dbReference type="HAMAP" id="MF_00083">
    <property type="entry name" value="Pept_tRNA_hydro_bact"/>
    <property type="match status" value="1"/>
</dbReference>
<dbReference type="InterPro" id="IPR001328">
    <property type="entry name" value="Pept_tRNA_hydro"/>
</dbReference>
<dbReference type="InterPro" id="IPR018171">
    <property type="entry name" value="Pept_tRNA_hydro_CS"/>
</dbReference>
<dbReference type="InterPro" id="IPR036416">
    <property type="entry name" value="Pept_tRNA_hydro_sf"/>
</dbReference>
<dbReference type="NCBIfam" id="TIGR00447">
    <property type="entry name" value="pth"/>
    <property type="match status" value="1"/>
</dbReference>
<dbReference type="PANTHER" id="PTHR17224">
    <property type="entry name" value="PEPTIDYL-TRNA HYDROLASE"/>
    <property type="match status" value="1"/>
</dbReference>
<dbReference type="PANTHER" id="PTHR17224:SF1">
    <property type="entry name" value="PEPTIDYL-TRNA HYDROLASE"/>
    <property type="match status" value="1"/>
</dbReference>
<dbReference type="Pfam" id="PF01195">
    <property type="entry name" value="Pept_tRNA_hydro"/>
    <property type="match status" value="1"/>
</dbReference>
<dbReference type="SUPFAM" id="SSF53178">
    <property type="entry name" value="Peptidyl-tRNA hydrolase-like"/>
    <property type="match status" value="1"/>
</dbReference>
<dbReference type="PROSITE" id="PS01195">
    <property type="entry name" value="PEPT_TRNA_HYDROL_1"/>
    <property type="match status" value="1"/>
</dbReference>
<dbReference type="PROSITE" id="PS01196">
    <property type="entry name" value="PEPT_TRNA_HYDROL_2"/>
    <property type="match status" value="1"/>
</dbReference>